<proteinExistence type="inferred from homology"/>
<geneLocation type="chloroplast"/>
<sequence length="81" mass="7990">MNPLISAASVIAAGLAVGLASIGPGVGQGTAAGQAVEGIARQPEAEGKIRGTLLLSLAFMEALTIYGLVVALALLFANPFV</sequence>
<reference key="1">
    <citation type="journal article" date="2006" name="BMC Genomics">
        <title>The complete chloroplast genome sequence of Gossypium hirsutum: organization and phylogenetic relationships to other angiosperms.</title>
        <authorList>
            <person name="Lee S.-B."/>
            <person name="Kaittanis C."/>
            <person name="Jansen R.K."/>
            <person name="Hostetler J.B."/>
            <person name="Tallon L.J."/>
            <person name="Town C.D."/>
            <person name="Daniell H."/>
        </authorList>
    </citation>
    <scope>NUCLEOTIDE SEQUENCE [LARGE SCALE GENOMIC DNA]</scope>
    <source>
        <strain>cv. Coker 310FR</strain>
    </source>
</reference>
<name>ATPH_GOSHI</name>
<accession>Q2L8Z2</accession>
<evidence type="ECO:0000255" key="1">
    <source>
        <dbReference type="HAMAP-Rule" id="MF_01396"/>
    </source>
</evidence>
<organism>
    <name type="scientific">Gossypium hirsutum</name>
    <name type="common">Upland cotton</name>
    <name type="synonym">Gossypium mexicanum</name>
    <dbReference type="NCBI Taxonomy" id="3635"/>
    <lineage>
        <taxon>Eukaryota</taxon>
        <taxon>Viridiplantae</taxon>
        <taxon>Streptophyta</taxon>
        <taxon>Embryophyta</taxon>
        <taxon>Tracheophyta</taxon>
        <taxon>Spermatophyta</taxon>
        <taxon>Magnoliopsida</taxon>
        <taxon>eudicotyledons</taxon>
        <taxon>Gunneridae</taxon>
        <taxon>Pentapetalae</taxon>
        <taxon>rosids</taxon>
        <taxon>malvids</taxon>
        <taxon>Malvales</taxon>
        <taxon>Malvaceae</taxon>
        <taxon>Malvoideae</taxon>
        <taxon>Gossypium</taxon>
    </lineage>
</organism>
<keyword id="KW-0066">ATP synthesis</keyword>
<keyword id="KW-0138">CF(0)</keyword>
<keyword id="KW-0150">Chloroplast</keyword>
<keyword id="KW-0375">Hydrogen ion transport</keyword>
<keyword id="KW-0406">Ion transport</keyword>
<keyword id="KW-0446">Lipid-binding</keyword>
<keyword id="KW-0472">Membrane</keyword>
<keyword id="KW-0934">Plastid</keyword>
<keyword id="KW-1185">Reference proteome</keyword>
<keyword id="KW-0793">Thylakoid</keyword>
<keyword id="KW-0812">Transmembrane</keyword>
<keyword id="KW-1133">Transmembrane helix</keyword>
<keyword id="KW-0813">Transport</keyword>
<protein>
    <recommendedName>
        <fullName evidence="1">ATP synthase subunit c, chloroplastic</fullName>
    </recommendedName>
    <alternativeName>
        <fullName evidence="1">ATP synthase F(0) sector subunit c</fullName>
    </alternativeName>
    <alternativeName>
        <fullName evidence="1">ATPase subunit III</fullName>
    </alternativeName>
    <alternativeName>
        <fullName evidence="1">F-type ATPase subunit c</fullName>
        <shortName evidence="1">F-ATPase subunit c</shortName>
    </alternativeName>
    <alternativeName>
        <fullName evidence="1">Lipid-binding protein</fullName>
    </alternativeName>
</protein>
<comment type="function">
    <text evidence="1">F(1)F(0) ATP synthase produces ATP from ADP in the presence of a proton or sodium gradient. F-type ATPases consist of two structural domains, F(1) containing the extramembraneous catalytic core and F(0) containing the membrane proton channel, linked together by a central stalk and a peripheral stalk. During catalysis, ATP synthesis in the catalytic domain of F(1) is coupled via a rotary mechanism of the central stalk subunits to proton translocation.</text>
</comment>
<comment type="function">
    <text evidence="1">Key component of the F(0) channel; it plays a direct role in translocation across the membrane. A homomeric c-ring of between 10-14 subunits forms the central stalk rotor element with the F(1) delta and epsilon subunits.</text>
</comment>
<comment type="subunit">
    <text evidence="1">F-type ATPases have 2 components, F(1) - the catalytic core - and F(0) - the membrane proton channel. F(1) has five subunits: alpha(3), beta(3), gamma(1), delta(1), epsilon(1). F(0) has four main subunits: a(1), b(1), b'(1) and c(10-14). The alpha and beta chains form an alternating ring which encloses part of the gamma chain. F(1) is attached to F(0) by a central stalk formed by the gamma and epsilon chains, while a peripheral stalk is formed by the delta, b and b' chains.</text>
</comment>
<comment type="subcellular location">
    <subcellularLocation>
        <location evidence="1">Plastid</location>
        <location evidence="1">Chloroplast thylakoid membrane</location>
        <topology evidence="1">Multi-pass membrane protein</topology>
    </subcellularLocation>
</comment>
<comment type="miscellaneous">
    <text>In plastids the F-type ATPase is also known as CF(1)CF(0).</text>
</comment>
<comment type="similarity">
    <text evidence="1">Belongs to the ATPase C chain family.</text>
</comment>
<feature type="chain" id="PRO_0000362919" description="ATP synthase subunit c, chloroplastic">
    <location>
        <begin position="1"/>
        <end position="81"/>
    </location>
</feature>
<feature type="transmembrane region" description="Helical" evidence="1">
    <location>
        <begin position="3"/>
        <end position="23"/>
    </location>
</feature>
<feature type="transmembrane region" description="Helical" evidence="1">
    <location>
        <begin position="57"/>
        <end position="77"/>
    </location>
</feature>
<feature type="site" description="Reversibly protonated during proton transport" evidence="1">
    <location>
        <position position="61"/>
    </location>
</feature>
<dbReference type="EMBL" id="DQ345959">
    <property type="protein sequence ID" value="ABC73615.1"/>
    <property type="molecule type" value="Genomic_DNA"/>
</dbReference>
<dbReference type="RefSeq" id="YP_538922.1">
    <property type="nucleotide sequence ID" value="NC_007944.1"/>
</dbReference>
<dbReference type="SMR" id="Q2L8Z2"/>
<dbReference type="GeneID" id="3989192"/>
<dbReference type="KEGG" id="ghi:3989192"/>
<dbReference type="OrthoDB" id="68748at41938"/>
<dbReference type="Proteomes" id="UP000189702">
    <property type="component" value="Chloroplast Pltd"/>
</dbReference>
<dbReference type="GO" id="GO:0009535">
    <property type="term" value="C:chloroplast thylakoid membrane"/>
    <property type="evidence" value="ECO:0007669"/>
    <property type="project" value="UniProtKB-SubCell"/>
</dbReference>
<dbReference type="GO" id="GO:0045259">
    <property type="term" value="C:proton-transporting ATP synthase complex"/>
    <property type="evidence" value="ECO:0007669"/>
    <property type="project" value="UniProtKB-KW"/>
</dbReference>
<dbReference type="GO" id="GO:0033177">
    <property type="term" value="C:proton-transporting two-sector ATPase complex, proton-transporting domain"/>
    <property type="evidence" value="ECO:0007669"/>
    <property type="project" value="InterPro"/>
</dbReference>
<dbReference type="GO" id="GO:0008289">
    <property type="term" value="F:lipid binding"/>
    <property type="evidence" value="ECO:0007669"/>
    <property type="project" value="UniProtKB-KW"/>
</dbReference>
<dbReference type="GO" id="GO:0046933">
    <property type="term" value="F:proton-transporting ATP synthase activity, rotational mechanism"/>
    <property type="evidence" value="ECO:0007669"/>
    <property type="project" value="UniProtKB-UniRule"/>
</dbReference>
<dbReference type="CDD" id="cd18183">
    <property type="entry name" value="ATP-synt_Fo_c_ATPH"/>
    <property type="match status" value="1"/>
</dbReference>
<dbReference type="FunFam" id="1.20.20.10:FF:000001">
    <property type="entry name" value="ATP synthase subunit c, chloroplastic"/>
    <property type="match status" value="1"/>
</dbReference>
<dbReference type="Gene3D" id="1.20.20.10">
    <property type="entry name" value="F1F0 ATP synthase subunit C"/>
    <property type="match status" value="1"/>
</dbReference>
<dbReference type="HAMAP" id="MF_01396">
    <property type="entry name" value="ATP_synth_c_bact"/>
    <property type="match status" value="1"/>
</dbReference>
<dbReference type="InterPro" id="IPR005953">
    <property type="entry name" value="ATP_synth_csu_bac/chlpt"/>
</dbReference>
<dbReference type="InterPro" id="IPR000454">
    <property type="entry name" value="ATP_synth_F0_csu"/>
</dbReference>
<dbReference type="InterPro" id="IPR020537">
    <property type="entry name" value="ATP_synth_F0_csu_DDCD_BS"/>
</dbReference>
<dbReference type="InterPro" id="IPR038662">
    <property type="entry name" value="ATP_synth_F0_csu_sf"/>
</dbReference>
<dbReference type="InterPro" id="IPR002379">
    <property type="entry name" value="ATPase_proteolipid_c-like_dom"/>
</dbReference>
<dbReference type="InterPro" id="IPR035921">
    <property type="entry name" value="F/V-ATP_Csub_sf"/>
</dbReference>
<dbReference type="NCBIfam" id="TIGR01260">
    <property type="entry name" value="ATP_synt_c"/>
    <property type="match status" value="1"/>
</dbReference>
<dbReference type="NCBIfam" id="NF005608">
    <property type="entry name" value="PRK07354.1"/>
    <property type="match status" value="1"/>
</dbReference>
<dbReference type="PANTHER" id="PTHR10031">
    <property type="entry name" value="ATP SYNTHASE LIPID-BINDING PROTEIN, MITOCHONDRIAL"/>
    <property type="match status" value="1"/>
</dbReference>
<dbReference type="PANTHER" id="PTHR10031:SF0">
    <property type="entry name" value="ATPASE PROTEIN 9"/>
    <property type="match status" value="1"/>
</dbReference>
<dbReference type="Pfam" id="PF00137">
    <property type="entry name" value="ATP-synt_C"/>
    <property type="match status" value="1"/>
</dbReference>
<dbReference type="PRINTS" id="PR00124">
    <property type="entry name" value="ATPASEC"/>
</dbReference>
<dbReference type="SUPFAM" id="SSF81333">
    <property type="entry name" value="F1F0 ATP synthase subunit C"/>
    <property type="match status" value="1"/>
</dbReference>
<dbReference type="PROSITE" id="PS00605">
    <property type="entry name" value="ATPASE_C"/>
    <property type="match status" value="1"/>
</dbReference>
<gene>
    <name evidence="1" type="primary">atpH</name>
</gene>